<reference key="1">
    <citation type="journal article" date="2006" name="Proc. Natl. Acad. Sci. U.S.A.">
        <title>Comparative genomics of the lactic acid bacteria.</title>
        <authorList>
            <person name="Makarova K.S."/>
            <person name="Slesarev A."/>
            <person name="Wolf Y.I."/>
            <person name="Sorokin A."/>
            <person name="Mirkin B."/>
            <person name="Koonin E.V."/>
            <person name="Pavlov A."/>
            <person name="Pavlova N."/>
            <person name="Karamychev V."/>
            <person name="Polouchine N."/>
            <person name="Shakhova V."/>
            <person name="Grigoriev I."/>
            <person name="Lou Y."/>
            <person name="Rohksar D."/>
            <person name="Lucas S."/>
            <person name="Huang K."/>
            <person name="Goodstein D.M."/>
            <person name="Hawkins T."/>
            <person name="Plengvidhya V."/>
            <person name="Welker D."/>
            <person name="Hughes J."/>
            <person name="Goh Y."/>
            <person name="Benson A."/>
            <person name="Baldwin K."/>
            <person name="Lee J.-H."/>
            <person name="Diaz-Muniz I."/>
            <person name="Dosti B."/>
            <person name="Smeianov V."/>
            <person name="Wechter W."/>
            <person name="Barabote R."/>
            <person name="Lorca G."/>
            <person name="Altermann E."/>
            <person name="Barrangou R."/>
            <person name="Ganesan B."/>
            <person name="Xie Y."/>
            <person name="Rawsthorne H."/>
            <person name="Tamir D."/>
            <person name="Parker C."/>
            <person name="Breidt F."/>
            <person name="Broadbent J.R."/>
            <person name="Hutkins R."/>
            <person name="O'Sullivan D."/>
            <person name="Steele J."/>
            <person name="Unlu G."/>
            <person name="Saier M.H. Jr."/>
            <person name="Klaenhammer T."/>
            <person name="Richardson P."/>
            <person name="Kozyavkin S."/>
            <person name="Weimer B.C."/>
            <person name="Mills D.A."/>
        </authorList>
    </citation>
    <scope>NUCLEOTIDE SEQUENCE [LARGE SCALE GENOMIC DNA]</scope>
    <source>
        <strain>ATCC 33323 / DSM 20243 / BCRC 14619 / CIP 102991 / JCM 1131 / KCTC 3163 / NCIMB 11718 / NCTC 13722 / AM63</strain>
    </source>
</reference>
<gene>
    <name evidence="1" type="primary">atpG</name>
    <name type="ordered locus">LGAS_1239</name>
</gene>
<comment type="function">
    <text evidence="1">Produces ATP from ADP in the presence of a proton gradient across the membrane. The gamma chain is believed to be important in regulating ATPase activity and the flow of protons through the CF(0) complex.</text>
</comment>
<comment type="subunit">
    <text evidence="1">F-type ATPases have 2 components, CF(1) - the catalytic core - and CF(0) - the membrane proton channel. CF(1) has five subunits: alpha(3), beta(3), gamma(1), delta(1), epsilon(1). CF(0) has three main subunits: a, b and c.</text>
</comment>
<comment type="subcellular location">
    <subcellularLocation>
        <location evidence="1">Cell membrane</location>
        <topology evidence="1">Peripheral membrane protein</topology>
    </subcellularLocation>
</comment>
<comment type="similarity">
    <text evidence="1">Belongs to the ATPase gamma chain family.</text>
</comment>
<evidence type="ECO:0000255" key="1">
    <source>
        <dbReference type="HAMAP-Rule" id="MF_00815"/>
    </source>
</evidence>
<organism>
    <name type="scientific">Lactobacillus gasseri (strain ATCC 33323 / DSM 20243 / BCRC 14619 / CIP 102991 / JCM 1131 / KCTC 3163 / NCIMB 11718 / NCTC 13722 / AM63)</name>
    <dbReference type="NCBI Taxonomy" id="324831"/>
    <lineage>
        <taxon>Bacteria</taxon>
        <taxon>Bacillati</taxon>
        <taxon>Bacillota</taxon>
        <taxon>Bacilli</taxon>
        <taxon>Lactobacillales</taxon>
        <taxon>Lactobacillaceae</taxon>
        <taxon>Lactobacillus</taxon>
    </lineage>
</organism>
<proteinExistence type="inferred from homology"/>
<dbReference type="EMBL" id="CP000413">
    <property type="protein sequence ID" value="ABJ60608.1"/>
    <property type="molecule type" value="Genomic_DNA"/>
</dbReference>
<dbReference type="RefSeq" id="WP_003647071.1">
    <property type="nucleotide sequence ID" value="NZ_WBMG01000002.1"/>
</dbReference>
<dbReference type="SMR" id="Q042L4"/>
<dbReference type="GeneID" id="29638418"/>
<dbReference type="KEGG" id="lga:LGAS_1239"/>
<dbReference type="HOGENOM" id="CLU_050669_0_1_9"/>
<dbReference type="BioCyc" id="LGAS324831:G1G6Y-1235-MONOMER"/>
<dbReference type="Proteomes" id="UP000000664">
    <property type="component" value="Chromosome"/>
</dbReference>
<dbReference type="GO" id="GO:0005886">
    <property type="term" value="C:plasma membrane"/>
    <property type="evidence" value="ECO:0007669"/>
    <property type="project" value="UniProtKB-SubCell"/>
</dbReference>
<dbReference type="GO" id="GO:0045259">
    <property type="term" value="C:proton-transporting ATP synthase complex"/>
    <property type="evidence" value="ECO:0007669"/>
    <property type="project" value="UniProtKB-KW"/>
</dbReference>
<dbReference type="GO" id="GO:0005524">
    <property type="term" value="F:ATP binding"/>
    <property type="evidence" value="ECO:0007669"/>
    <property type="project" value="UniProtKB-UniRule"/>
</dbReference>
<dbReference type="GO" id="GO:0046933">
    <property type="term" value="F:proton-transporting ATP synthase activity, rotational mechanism"/>
    <property type="evidence" value="ECO:0007669"/>
    <property type="project" value="UniProtKB-UniRule"/>
</dbReference>
<dbReference type="GO" id="GO:0042777">
    <property type="term" value="P:proton motive force-driven plasma membrane ATP synthesis"/>
    <property type="evidence" value="ECO:0007669"/>
    <property type="project" value="UniProtKB-UniRule"/>
</dbReference>
<dbReference type="CDD" id="cd12151">
    <property type="entry name" value="F1-ATPase_gamma"/>
    <property type="match status" value="1"/>
</dbReference>
<dbReference type="Gene3D" id="3.40.1380.10">
    <property type="match status" value="1"/>
</dbReference>
<dbReference type="Gene3D" id="1.10.287.80">
    <property type="entry name" value="ATP synthase, gamma subunit, helix hairpin domain"/>
    <property type="match status" value="1"/>
</dbReference>
<dbReference type="HAMAP" id="MF_00815">
    <property type="entry name" value="ATP_synth_gamma_bact"/>
    <property type="match status" value="1"/>
</dbReference>
<dbReference type="InterPro" id="IPR035968">
    <property type="entry name" value="ATP_synth_F1_ATPase_gsu"/>
</dbReference>
<dbReference type="InterPro" id="IPR000131">
    <property type="entry name" value="ATP_synth_F1_gsu"/>
</dbReference>
<dbReference type="InterPro" id="IPR023632">
    <property type="entry name" value="ATP_synth_F1_gsu_CS"/>
</dbReference>
<dbReference type="NCBIfam" id="TIGR01146">
    <property type="entry name" value="ATPsyn_F1gamma"/>
    <property type="match status" value="1"/>
</dbReference>
<dbReference type="NCBIfam" id="NF004147">
    <property type="entry name" value="PRK05621.2-1"/>
    <property type="match status" value="1"/>
</dbReference>
<dbReference type="PANTHER" id="PTHR11693">
    <property type="entry name" value="ATP SYNTHASE GAMMA CHAIN"/>
    <property type="match status" value="1"/>
</dbReference>
<dbReference type="PANTHER" id="PTHR11693:SF22">
    <property type="entry name" value="ATP SYNTHASE SUBUNIT GAMMA, MITOCHONDRIAL"/>
    <property type="match status" value="1"/>
</dbReference>
<dbReference type="Pfam" id="PF00231">
    <property type="entry name" value="ATP-synt"/>
    <property type="match status" value="1"/>
</dbReference>
<dbReference type="PRINTS" id="PR00126">
    <property type="entry name" value="ATPASEGAMMA"/>
</dbReference>
<dbReference type="SUPFAM" id="SSF52943">
    <property type="entry name" value="ATP synthase (F1-ATPase), gamma subunit"/>
    <property type="match status" value="1"/>
</dbReference>
<dbReference type="PROSITE" id="PS00153">
    <property type="entry name" value="ATPASE_GAMMA"/>
    <property type="match status" value="1"/>
</dbReference>
<feature type="chain" id="PRO_1000053237" description="ATP synthase gamma chain">
    <location>
        <begin position="1"/>
        <end position="318"/>
    </location>
</feature>
<protein>
    <recommendedName>
        <fullName evidence="1">ATP synthase gamma chain</fullName>
    </recommendedName>
    <alternativeName>
        <fullName evidence="1">ATP synthase F1 sector gamma subunit</fullName>
    </alternativeName>
    <alternativeName>
        <fullName evidence="1">F-ATPase gamma subunit</fullName>
    </alternativeName>
</protein>
<keyword id="KW-0066">ATP synthesis</keyword>
<keyword id="KW-1003">Cell membrane</keyword>
<keyword id="KW-0139">CF(1)</keyword>
<keyword id="KW-0375">Hydrogen ion transport</keyword>
<keyword id="KW-0406">Ion transport</keyword>
<keyword id="KW-0472">Membrane</keyword>
<keyword id="KW-0813">Transport</keyword>
<accession>Q042L4</accession>
<name>ATPG_LACGA</name>
<sequence>MAESLLELKKKIASIQKTGQITEAMRMVSGVKLNRTEKLDQEYTIYNDKVRATVSHLMSSQIVKQLGKETKEYNEFGGSASIDYSNFFDLGTLASLVQPRKKIKSTGYLVISGDRGLVGSYNSQVIKNMMSIFKDADAQNKDVKILAVGSVAAQFFKKQNLNVVYEYSGVSDVPTYNEVRDIIQTAVKLYLNGVYDELFVCYTHHVNTLTSAFRVESMLPISDIDINHKDTMPKDYIIEPDIDSVLKTVLPQFSKSMIFGAILDAKTAEHASSMTAMQSASKNADDVVSGLKTKLNRARQAQITTEITEIIGGANALE</sequence>